<organism>
    <name type="scientific">Danio rerio</name>
    <name type="common">Zebrafish</name>
    <name type="synonym">Brachydanio rerio</name>
    <dbReference type="NCBI Taxonomy" id="7955"/>
    <lineage>
        <taxon>Eukaryota</taxon>
        <taxon>Metazoa</taxon>
        <taxon>Chordata</taxon>
        <taxon>Craniata</taxon>
        <taxon>Vertebrata</taxon>
        <taxon>Euteleostomi</taxon>
        <taxon>Actinopterygii</taxon>
        <taxon>Neopterygii</taxon>
        <taxon>Teleostei</taxon>
        <taxon>Ostariophysi</taxon>
        <taxon>Cypriniformes</taxon>
        <taxon>Danionidae</taxon>
        <taxon>Danioninae</taxon>
        <taxon>Danio</taxon>
    </lineage>
</organism>
<comment type="function">
    <text evidence="1 5">Part of a specialized transcription system that mediates the transcription of most ribosomal proteins through the 5'-TCT-3' motif which is a core promoter element at these genes. Seems to also mediate the transcription of NF1. Does not bind the TATA box (By similarity). Members of the TBP family are differentially required to regulate transcription and development during early embryogenesis.</text>
</comment>
<comment type="subcellular location">
    <subcellularLocation>
        <location evidence="3">Cytoplasm</location>
    </subcellularLocation>
    <subcellularLocation>
        <location evidence="3">Nucleus</location>
    </subcellularLocation>
</comment>
<comment type="similarity">
    <text evidence="4">Belongs to the TBP family.</text>
</comment>
<proteinExistence type="evidence at transcript level"/>
<dbReference type="EMBL" id="AF503448">
    <property type="protein sequence ID" value="AAQ07595.1"/>
    <property type="molecule type" value="mRNA"/>
</dbReference>
<dbReference type="EMBL" id="BC085661">
    <property type="protein sequence ID" value="AAH85661.1"/>
    <property type="molecule type" value="mRNA"/>
</dbReference>
<dbReference type="RefSeq" id="NP_991285.1">
    <property type="nucleotide sequence ID" value="NM_205722.1"/>
</dbReference>
<dbReference type="RefSeq" id="XP_005162362.1">
    <property type="nucleotide sequence ID" value="XM_005162305.4"/>
</dbReference>
<dbReference type="SMR" id="Q5U385"/>
<dbReference type="FunCoup" id="Q5U385">
    <property type="interactions" value="559"/>
</dbReference>
<dbReference type="STRING" id="7955.ENSDARP00000053533"/>
<dbReference type="PaxDb" id="7955-ENSDARP00000053533"/>
<dbReference type="Ensembl" id="ENSDART00000053534">
    <property type="protein sequence ID" value="ENSDARP00000053533"/>
    <property type="gene ID" value="ENSDARG00000036868"/>
</dbReference>
<dbReference type="Ensembl" id="ENSDART00000160748">
    <property type="protein sequence ID" value="ENSDARP00000134538"/>
    <property type="gene ID" value="ENSDARG00000036868"/>
</dbReference>
<dbReference type="GeneID" id="403035"/>
<dbReference type="KEGG" id="dre:403035"/>
<dbReference type="AGR" id="ZFIN:ZDB-GENE-040520-2"/>
<dbReference type="CTD" id="9519"/>
<dbReference type="ZFIN" id="ZDB-GENE-040520-2">
    <property type="gene designation" value="tbpl1"/>
</dbReference>
<dbReference type="eggNOG" id="KOG3302">
    <property type="taxonomic scope" value="Eukaryota"/>
</dbReference>
<dbReference type="HOGENOM" id="CLU_060161_4_1_1"/>
<dbReference type="InParanoid" id="Q5U385"/>
<dbReference type="OMA" id="NCEYEPE"/>
<dbReference type="OrthoDB" id="2127950at2759"/>
<dbReference type="PhylomeDB" id="Q5U385"/>
<dbReference type="TreeFam" id="TF300102"/>
<dbReference type="PRO" id="PR:Q5U385"/>
<dbReference type="Proteomes" id="UP000000437">
    <property type="component" value="Alternate scaffold 23"/>
</dbReference>
<dbReference type="Proteomes" id="UP000000437">
    <property type="component" value="Chromosome 23"/>
</dbReference>
<dbReference type="Bgee" id="ENSDARG00000036868">
    <property type="expression patterns" value="Expressed in mature ovarian follicle and 28 other cell types or tissues"/>
</dbReference>
<dbReference type="GO" id="GO:0005737">
    <property type="term" value="C:cytoplasm"/>
    <property type="evidence" value="ECO:0000250"/>
    <property type="project" value="UniProtKB"/>
</dbReference>
<dbReference type="GO" id="GO:0005634">
    <property type="term" value="C:nucleus"/>
    <property type="evidence" value="ECO:0000250"/>
    <property type="project" value="UniProtKB"/>
</dbReference>
<dbReference type="GO" id="GO:0003677">
    <property type="term" value="F:DNA binding"/>
    <property type="evidence" value="ECO:0007669"/>
    <property type="project" value="UniProtKB-KW"/>
</dbReference>
<dbReference type="GO" id="GO:0140223">
    <property type="term" value="F:general transcription initiation factor activity"/>
    <property type="evidence" value="ECO:0000318"/>
    <property type="project" value="GO_Central"/>
</dbReference>
<dbReference type="GO" id="GO:0006352">
    <property type="term" value="P:DNA-templated transcription initiation"/>
    <property type="evidence" value="ECO:0000318"/>
    <property type="project" value="GO_Central"/>
</dbReference>
<dbReference type="GO" id="GO:0009792">
    <property type="term" value="P:embryo development ending in birth or egg hatching"/>
    <property type="evidence" value="ECO:0000315"/>
    <property type="project" value="UniProtKB"/>
</dbReference>
<dbReference type="GO" id="GO:0006366">
    <property type="term" value="P:transcription by RNA polymerase II"/>
    <property type="evidence" value="ECO:0000315"/>
    <property type="project" value="UniProtKB"/>
</dbReference>
<dbReference type="CDD" id="cd04517">
    <property type="entry name" value="TLF"/>
    <property type="match status" value="1"/>
</dbReference>
<dbReference type="FunFam" id="3.30.310.10:FF:000005">
    <property type="entry name" value="TATA box-binding protein-like 1"/>
    <property type="match status" value="1"/>
</dbReference>
<dbReference type="FunFam" id="3.30.310.10:FF:000009">
    <property type="entry name" value="TatA box-binding protein-like protein 1"/>
    <property type="match status" value="1"/>
</dbReference>
<dbReference type="Gene3D" id="3.30.310.10">
    <property type="entry name" value="TATA-Binding Protein"/>
    <property type="match status" value="2"/>
</dbReference>
<dbReference type="InterPro" id="IPR000814">
    <property type="entry name" value="TBP"/>
</dbReference>
<dbReference type="InterPro" id="IPR015445">
    <property type="entry name" value="TBP-like"/>
</dbReference>
<dbReference type="InterPro" id="IPR012295">
    <property type="entry name" value="TBP_dom_sf"/>
</dbReference>
<dbReference type="PANTHER" id="PTHR10126">
    <property type="entry name" value="TATA-BOX BINDING PROTEIN"/>
    <property type="match status" value="1"/>
</dbReference>
<dbReference type="Pfam" id="PF00352">
    <property type="entry name" value="TBP"/>
    <property type="match status" value="2"/>
</dbReference>
<dbReference type="PRINTS" id="PR00686">
    <property type="entry name" value="TIFACTORIID"/>
</dbReference>
<dbReference type="SUPFAM" id="SSF55945">
    <property type="entry name" value="TATA-box binding protein-like"/>
    <property type="match status" value="2"/>
</dbReference>
<sequence>MEPSNDVALDIIVTNVVSVFRTRCHLNLRTIGLEGTNVIYKPEVGKVLMKLRKPRITASIWSSGKIICTGATSEEEAKLGARRLARCLQKMGFKVRFSDFKVVNVLAVCSMPFQIRLIEFTKNNRPIASYEPELHPAASYRIKNLRSTVQVFSTGNITVTGPNVQSVASAVEEIYPLLFECRKTLS</sequence>
<accession>Q5U385</accession>
<accession>Q71H63</accession>
<keyword id="KW-0963">Cytoplasm</keyword>
<keyword id="KW-0217">Developmental protein</keyword>
<keyword id="KW-0238">DNA-binding</keyword>
<keyword id="KW-0539">Nucleus</keyword>
<keyword id="KW-1185">Reference proteome</keyword>
<keyword id="KW-0804">Transcription</keyword>
<keyword id="KW-0805">Transcription regulation</keyword>
<reference evidence="6" key="1">
    <citation type="journal article" date="2001" name="Curr. Biol.">
        <title>TBP is not universally required for zygotic RNA polymerase II transcription in zebrafish.</title>
        <authorList>
            <person name="Mueller F."/>
            <person name="Lakatos L."/>
            <person name="Dantonel J.-C."/>
            <person name="Straehle U."/>
            <person name="Tora L."/>
        </authorList>
    </citation>
    <scope>NUCLEOTIDE SEQUENCE [MRNA]</scope>
    <scope>FUNCTION</scope>
    <source>
        <tissue>Gonad</tissue>
    </source>
</reference>
<reference evidence="7" key="2">
    <citation type="submission" date="2004-11" db="EMBL/GenBank/DDBJ databases">
        <authorList>
            <consortium name="NIH - Zebrafish Gene Collection (ZGC) project"/>
        </authorList>
    </citation>
    <scope>NUCLEOTIDE SEQUENCE [LARGE SCALE MRNA]</scope>
</reference>
<gene>
    <name evidence="8" type="primary">tbpl1</name>
    <name evidence="7" type="synonym">tlf</name>
    <name evidence="8" type="synonym">tlp</name>
    <name evidence="8" type="synonym">trf2</name>
    <name evidence="8" type="synonym">trp</name>
</gene>
<name>TBPL1_DANRE</name>
<feature type="chain" id="PRO_0000351152" description="TATA box-binding protein-like 1">
    <location>
        <begin position="1"/>
        <end position="186"/>
    </location>
</feature>
<feature type="sequence conflict" description="In Ref. 1; AAQ07595." evidence="6" ref="1">
    <original>A</original>
    <variation>S</variation>
    <location>
        <position position="81"/>
    </location>
</feature>
<protein>
    <recommendedName>
        <fullName evidence="2">TATA box-binding protein-like 1</fullName>
        <shortName evidence="2">TBP-like 1</shortName>
    </recommendedName>
    <alternativeName>
        <fullName evidence="2">TATA box-binding protein-related factor 2</fullName>
        <shortName evidence="2">TBP-related factor 2</shortName>
    </alternativeName>
    <alternativeName>
        <fullName evidence="7">TBP-like factor</fullName>
    </alternativeName>
</protein>
<evidence type="ECO:0000250" key="1"/>
<evidence type="ECO:0000250" key="2">
    <source>
        <dbReference type="UniProtKB" id="P62380"/>
    </source>
</evidence>
<evidence type="ECO:0000250" key="3">
    <source>
        <dbReference type="UniProtKB" id="Q6SJ96"/>
    </source>
</evidence>
<evidence type="ECO:0000255" key="4"/>
<evidence type="ECO:0000269" key="5">
    <source>
    </source>
</evidence>
<evidence type="ECO:0000305" key="6"/>
<evidence type="ECO:0000312" key="7">
    <source>
        <dbReference type="EMBL" id="AAQ07595.1"/>
    </source>
</evidence>
<evidence type="ECO:0000312" key="8">
    <source>
        <dbReference type="ZFIN" id="ZDB-GENE-040520-2"/>
    </source>
</evidence>